<evidence type="ECO:0000250" key="1"/>
<evidence type="ECO:0000255" key="2">
    <source>
        <dbReference type="PROSITE-ProRule" id="PRU00286"/>
    </source>
</evidence>
<evidence type="ECO:0000256" key="3">
    <source>
        <dbReference type="SAM" id="MobiDB-lite"/>
    </source>
</evidence>
<evidence type="ECO:0000305" key="4"/>
<organism>
    <name type="scientific">Mus musculus</name>
    <name type="common">Mouse</name>
    <dbReference type="NCBI Taxonomy" id="10090"/>
    <lineage>
        <taxon>Eukaryota</taxon>
        <taxon>Metazoa</taxon>
        <taxon>Chordata</taxon>
        <taxon>Craniata</taxon>
        <taxon>Vertebrata</taxon>
        <taxon>Euteleostomi</taxon>
        <taxon>Mammalia</taxon>
        <taxon>Eutheria</taxon>
        <taxon>Euarchontoglires</taxon>
        <taxon>Glires</taxon>
        <taxon>Rodentia</taxon>
        <taxon>Myomorpha</taxon>
        <taxon>Muroidea</taxon>
        <taxon>Muridae</taxon>
        <taxon>Murinae</taxon>
        <taxon>Mus</taxon>
        <taxon>Mus</taxon>
    </lineage>
</organism>
<protein>
    <recommendedName>
        <fullName>DnaJ homolog subfamily B member 7</fullName>
    </recommendedName>
    <alternativeName>
        <fullName>mDj5</fullName>
    </alternativeName>
</protein>
<reference key="1">
    <citation type="journal article" date="2000" name="Cell Stress Chaperones">
        <title>Mammalian HSP40/DNAJ homologs: cloning of novel cDNAs and a proposal for their classification and nomenclature.</title>
        <authorList>
            <person name="Ohtsuka K."/>
            <person name="Hata M."/>
        </authorList>
    </citation>
    <scope>NUCLEOTIDE SEQUENCE [MRNA]</scope>
    <source>
        <strain>CD-1</strain>
    </source>
</reference>
<reference key="2">
    <citation type="journal article" date="2005" name="Science">
        <title>The transcriptional landscape of the mammalian genome.</title>
        <authorList>
            <person name="Carninci P."/>
            <person name="Kasukawa T."/>
            <person name="Katayama S."/>
            <person name="Gough J."/>
            <person name="Frith M.C."/>
            <person name="Maeda N."/>
            <person name="Oyama R."/>
            <person name="Ravasi T."/>
            <person name="Lenhard B."/>
            <person name="Wells C."/>
            <person name="Kodzius R."/>
            <person name="Shimokawa K."/>
            <person name="Bajic V.B."/>
            <person name="Brenner S.E."/>
            <person name="Batalov S."/>
            <person name="Forrest A.R."/>
            <person name="Zavolan M."/>
            <person name="Davis M.J."/>
            <person name="Wilming L.G."/>
            <person name="Aidinis V."/>
            <person name="Allen J.E."/>
            <person name="Ambesi-Impiombato A."/>
            <person name="Apweiler R."/>
            <person name="Aturaliya R.N."/>
            <person name="Bailey T.L."/>
            <person name="Bansal M."/>
            <person name="Baxter L."/>
            <person name="Beisel K.W."/>
            <person name="Bersano T."/>
            <person name="Bono H."/>
            <person name="Chalk A.M."/>
            <person name="Chiu K.P."/>
            <person name="Choudhary V."/>
            <person name="Christoffels A."/>
            <person name="Clutterbuck D.R."/>
            <person name="Crowe M.L."/>
            <person name="Dalla E."/>
            <person name="Dalrymple B.P."/>
            <person name="de Bono B."/>
            <person name="Della Gatta G."/>
            <person name="di Bernardo D."/>
            <person name="Down T."/>
            <person name="Engstrom P."/>
            <person name="Fagiolini M."/>
            <person name="Faulkner G."/>
            <person name="Fletcher C.F."/>
            <person name="Fukushima T."/>
            <person name="Furuno M."/>
            <person name="Futaki S."/>
            <person name="Gariboldi M."/>
            <person name="Georgii-Hemming P."/>
            <person name="Gingeras T.R."/>
            <person name="Gojobori T."/>
            <person name="Green R.E."/>
            <person name="Gustincich S."/>
            <person name="Harbers M."/>
            <person name="Hayashi Y."/>
            <person name="Hensch T.K."/>
            <person name="Hirokawa N."/>
            <person name="Hill D."/>
            <person name="Huminiecki L."/>
            <person name="Iacono M."/>
            <person name="Ikeo K."/>
            <person name="Iwama A."/>
            <person name="Ishikawa T."/>
            <person name="Jakt M."/>
            <person name="Kanapin A."/>
            <person name="Katoh M."/>
            <person name="Kawasawa Y."/>
            <person name="Kelso J."/>
            <person name="Kitamura H."/>
            <person name="Kitano H."/>
            <person name="Kollias G."/>
            <person name="Krishnan S.P."/>
            <person name="Kruger A."/>
            <person name="Kummerfeld S.K."/>
            <person name="Kurochkin I.V."/>
            <person name="Lareau L.F."/>
            <person name="Lazarevic D."/>
            <person name="Lipovich L."/>
            <person name="Liu J."/>
            <person name="Liuni S."/>
            <person name="McWilliam S."/>
            <person name="Madan Babu M."/>
            <person name="Madera M."/>
            <person name="Marchionni L."/>
            <person name="Matsuda H."/>
            <person name="Matsuzawa S."/>
            <person name="Miki H."/>
            <person name="Mignone F."/>
            <person name="Miyake S."/>
            <person name="Morris K."/>
            <person name="Mottagui-Tabar S."/>
            <person name="Mulder N."/>
            <person name="Nakano N."/>
            <person name="Nakauchi H."/>
            <person name="Ng P."/>
            <person name="Nilsson R."/>
            <person name="Nishiguchi S."/>
            <person name="Nishikawa S."/>
            <person name="Nori F."/>
            <person name="Ohara O."/>
            <person name="Okazaki Y."/>
            <person name="Orlando V."/>
            <person name="Pang K.C."/>
            <person name="Pavan W.J."/>
            <person name="Pavesi G."/>
            <person name="Pesole G."/>
            <person name="Petrovsky N."/>
            <person name="Piazza S."/>
            <person name="Reed J."/>
            <person name="Reid J.F."/>
            <person name="Ring B.Z."/>
            <person name="Ringwald M."/>
            <person name="Rost B."/>
            <person name="Ruan Y."/>
            <person name="Salzberg S.L."/>
            <person name="Sandelin A."/>
            <person name="Schneider C."/>
            <person name="Schoenbach C."/>
            <person name="Sekiguchi K."/>
            <person name="Semple C.A."/>
            <person name="Seno S."/>
            <person name="Sessa L."/>
            <person name="Sheng Y."/>
            <person name="Shibata Y."/>
            <person name="Shimada H."/>
            <person name="Shimada K."/>
            <person name="Silva D."/>
            <person name="Sinclair B."/>
            <person name="Sperling S."/>
            <person name="Stupka E."/>
            <person name="Sugiura K."/>
            <person name="Sultana R."/>
            <person name="Takenaka Y."/>
            <person name="Taki K."/>
            <person name="Tammoja K."/>
            <person name="Tan S.L."/>
            <person name="Tang S."/>
            <person name="Taylor M.S."/>
            <person name="Tegner J."/>
            <person name="Teichmann S.A."/>
            <person name="Ueda H.R."/>
            <person name="van Nimwegen E."/>
            <person name="Verardo R."/>
            <person name="Wei C.L."/>
            <person name="Yagi K."/>
            <person name="Yamanishi H."/>
            <person name="Zabarovsky E."/>
            <person name="Zhu S."/>
            <person name="Zimmer A."/>
            <person name="Hide W."/>
            <person name="Bult C."/>
            <person name="Grimmond S.M."/>
            <person name="Teasdale R.D."/>
            <person name="Liu E.T."/>
            <person name="Brusic V."/>
            <person name="Quackenbush J."/>
            <person name="Wahlestedt C."/>
            <person name="Mattick J.S."/>
            <person name="Hume D.A."/>
            <person name="Kai C."/>
            <person name="Sasaki D."/>
            <person name="Tomaru Y."/>
            <person name="Fukuda S."/>
            <person name="Kanamori-Katayama M."/>
            <person name="Suzuki M."/>
            <person name="Aoki J."/>
            <person name="Arakawa T."/>
            <person name="Iida J."/>
            <person name="Imamura K."/>
            <person name="Itoh M."/>
            <person name="Kato T."/>
            <person name="Kawaji H."/>
            <person name="Kawagashira N."/>
            <person name="Kawashima T."/>
            <person name="Kojima M."/>
            <person name="Kondo S."/>
            <person name="Konno H."/>
            <person name="Nakano K."/>
            <person name="Ninomiya N."/>
            <person name="Nishio T."/>
            <person name="Okada M."/>
            <person name="Plessy C."/>
            <person name="Shibata K."/>
            <person name="Shiraki T."/>
            <person name="Suzuki S."/>
            <person name="Tagami M."/>
            <person name="Waki K."/>
            <person name="Watahiki A."/>
            <person name="Okamura-Oho Y."/>
            <person name="Suzuki H."/>
            <person name="Kawai J."/>
            <person name="Hayashizaki Y."/>
        </authorList>
    </citation>
    <scope>NUCLEOTIDE SEQUENCE [LARGE SCALE MRNA]</scope>
    <source>
        <strain>C57BL/6J</strain>
        <tissue>Testis</tissue>
    </source>
</reference>
<keyword id="KW-0143">Chaperone</keyword>
<keyword id="KW-1185">Reference proteome</keyword>
<dbReference type="EMBL" id="AB028855">
    <property type="protein sequence ID" value="BAA88303.1"/>
    <property type="status" value="ALT_FRAME"/>
    <property type="molecule type" value="mRNA"/>
</dbReference>
<dbReference type="EMBL" id="AK006201">
    <property type="protein sequence ID" value="BAB24456.1"/>
    <property type="molecule type" value="mRNA"/>
</dbReference>
<dbReference type="EMBL" id="AK077186">
    <property type="protein sequence ID" value="BAC36668.1"/>
    <property type="molecule type" value="mRNA"/>
</dbReference>
<dbReference type="CCDS" id="CCDS37148.1"/>
<dbReference type="RefSeq" id="NP_067292.2">
    <property type="nucleotide sequence ID" value="NM_021317.2"/>
</dbReference>
<dbReference type="SMR" id="Q9QYI8"/>
<dbReference type="FunCoup" id="Q9QYI8">
    <property type="interactions" value="723"/>
</dbReference>
<dbReference type="STRING" id="10090.ENSMUSP00000100712"/>
<dbReference type="GlyGen" id="Q9QYI8">
    <property type="glycosylation" value="1 site"/>
</dbReference>
<dbReference type="iPTMnet" id="Q9QYI8"/>
<dbReference type="PhosphoSitePlus" id="Q9QYI8"/>
<dbReference type="PaxDb" id="10090-ENSMUSP00000100712"/>
<dbReference type="ProteomicsDB" id="279457"/>
<dbReference type="Antibodypedia" id="256">
    <property type="antibodies" value="39 antibodies from 18 providers"/>
</dbReference>
<dbReference type="DNASU" id="57755"/>
<dbReference type="Ensembl" id="ENSMUST00000057236.5">
    <property type="protein sequence ID" value="ENSMUSP00000100712.3"/>
    <property type="gene ID" value="ENSMUSG00000047108.5"/>
</dbReference>
<dbReference type="GeneID" id="57755"/>
<dbReference type="KEGG" id="mmu:57755"/>
<dbReference type="UCSC" id="uc007wwp.1">
    <property type="organism name" value="mouse"/>
</dbReference>
<dbReference type="AGR" id="MGI:1914012"/>
<dbReference type="CTD" id="150353"/>
<dbReference type="MGI" id="MGI:1914012">
    <property type="gene designation" value="Dnajb7"/>
</dbReference>
<dbReference type="VEuPathDB" id="HostDB:ENSMUSG00000047108"/>
<dbReference type="eggNOG" id="KOG0714">
    <property type="taxonomic scope" value="Eukaryota"/>
</dbReference>
<dbReference type="GeneTree" id="ENSGT00940000163470"/>
<dbReference type="HOGENOM" id="CLU_017633_12_0_1"/>
<dbReference type="InParanoid" id="Q9QYI8"/>
<dbReference type="OMA" id="QYTFVDN"/>
<dbReference type="OrthoDB" id="10250354at2759"/>
<dbReference type="PhylomeDB" id="Q9QYI8"/>
<dbReference type="TreeFam" id="TF105142"/>
<dbReference type="BioGRID-ORCS" id="57755">
    <property type="hits" value="3 hits in 77 CRISPR screens"/>
</dbReference>
<dbReference type="PRO" id="PR:Q9QYI8"/>
<dbReference type="Proteomes" id="UP000000589">
    <property type="component" value="Chromosome 15"/>
</dbReference>
<dbReference type="RNAct" id="Q9QYI8">
    <property type="molecule type" value="protein"/>
</dbReference>
<dbReference type="Bgee" id="ENSMUSG00000047108">
    <property type="expression patterns" value="Expressed in seminiferous tubule of testis and 32 other cell types or tissues"/>
</dbReference>
<dbReference type="GO" id="GO:0030544">
    <property type="term" value="F:Hsp70 protein binding"/>
    <property type="evidence" value="ECO:0007669"/>
    <property type="project" value="InterPro"/>
</dbReference>
<dbReference type="GO" id="GO:0051082">
    <property type="term" value="F:unfolded protein binding"/>
    <property type="evidence" value="ECO:0007669"/>
    <property type="project" value="InterPro"/>
</dbReference>
<dbReference type="GO" id="GO:0061077">
    <property type="term" value="P:chaperone-mediated protein folding"/>
    <property type="evidence" value="ECO:0007669"/>
    <property type="project" value="InterPro"/>
</dbReference>
<dbReference type="CDD" id="cd06257">
    <property type="entry name" value="DnaJ"/>
    <property type="match status" value="1"/>
</dbReference>
<dbReference type="FunFam" id="1.10.287.110:FF:000021">
    <property type="entry name" value="DnaJ (Hsp40) homolog, subfamily B, member 2"/>
    <property type="match status" value="1"/>
</dbReference>
<dbReference type="Gene3D" id="1.10.287.110">
    <property type="entry name" value="DnaJ domain"/>
    <property type="match status" value="1"/>
</dbReference>
<dbReference type="InterPro" id="IPR001623">
    <property type="entry name" value="DnaJ_domain"/>
</dbReference>
<dbReference type="InterPro" id="IPR018253">
    <property type="entry name" value="DnaJ_domain_CS"/>
</dbReference>
<dbReference type="InterPro" id="IPR043183">
    <property type="entry name" value="DNJB2/6-like"/>
</dbReference>
<dbReference type="InterPro" id="IPR036869">
    <property type="entry name" value="J_dom_sf"/>
</dbReference>
<dbReference type="PANTHER" id="PTHR45168">
    <property type="entry name" value="DNAJ HOMOLOG SUBFAMILY B MEMBER 2"/>
    <property type="match status" value="1"/>
</dbReference>
<dbReference type="PANTHER" id="PTHR45168:SF4">
    <property type="entry name" value="SIMILAR TO DNAJ HOMOLOG SUBFAMILY B MEMBER 6 (HEAT SHOCK PROTEIN J2) (HSJ-2) (MRJ) (MDJ4)"/>
    <property type="match status" value="1"/>
</dbReference>
<dbReference type="Pfam" id="PF00226">
    <property type="entry name" value="DnaJ"/>
    <property type="match status" value="1"/>
</dbReference>
<dbReference type="PRINTS" id="PR00625">
    <property type="entry name" value="JDOMAIN"/>
</dbReference>
<dbReference type="SMART" id="SM00271">
    <property type="entry name" value="DnaJ"/>
    <property type="match status" value="1"/>
</dbReference>
<dbReference type="SUPFAM" id="SSF46565">
    <property type="entry name" value="Chaperone J-domain"/>
    <property type="match status" value="1"/>
</dbReference>
<dbReference type="PROSITE" id="PS00636">
    <property type="entry name" value="DNAJ_1"/>
    <property type="match status" value="1"/>
</dbReference>
<dbReference type="PROSITE" id="PS50076">
    <property type="entry name" value="DNAJ_2"/>
    <property type="match status" value="1"/>
</dbReference>
<sequence>MVDYYEVLGVQRYASPEDIKRAYRKVALKWHPDKNPENKEEAERKFKEVAEAYEVLSNVEKRDIYDKYGKEGLDGRGASHLDDEREYRFTFRKADDVFKEIFGERDPFSFHLFEDSLEGLLNSSRSPSGSRGRGAGSHVSRAYDHPALSGLSSYDTGYSSYVSLGHEGLTSFSSLALDDSGMGNYIPITPSGKVINGRNINTKKAFENRQEREAEDDSELISFLVNSVANEEHFTDKCNWRRQSFNNYSPNSYSSSNTTQYTLVDNNEQGTSWVTNKKEPSIFSAGFKEGGRRKKKKHKEGQKKKKSNKRNH</sequence>
<proteinExistence type="evidence at transcript level"/>
<comment type="function">
    <text evidence="1">Probably acts as a co-chaperone.</text>
</comment>
<comment type="sequence caution" evidence="4">
    <conflict type="frameshift">
        <sequence resource="EMBL-CDS" id="BAA88303"/>
    </conflict>
</comment>
<accession>Q9QYI8</accession>
<accession>Q9DA41</accession>
<gene>
    <name type="primary">Dnajb7</name>
</gene>
<name>DNJB7_MOUSE</name>
<feature type="chain" id="PRO_0000071028" description="DnaJ homolog subfamily B member 7">
    <location>
        <begin position="1"/>
        <end position="312"/>
    </location>
</feature>
<feature type="domain" description="J" evidence="2">
    <location>
        <begin position="3"/>
        <end position="69"/>
    </location>
</feature>
<feature type="region of interest" description="Disordered" evidence="3">
    <location>
        <begin position="272"/>
        <end position="312"/>
    </location>
</feature>
<feature type="compositionally biased region" description="Basic residues" evidence="3">
    <location>
        <begin position="291"/>
        <end position="312"/>
    </location>
</feature>
<feature type="sequence conflict" description="In Ref. 1; BAA88303." evidence="4" ref="1">
    <original>S</original>
    <variation>T</variation>
    <location>
        <position position="126"/>
    </location>
</feature>
<feature type="sequence conflict" description="In Ref. 1; BAA88303." evidence="4" ref="1">
    <original>G</original>
    <variation>R</variation>
    <location>
        <position position="134"/>
    </location>
</feature>
<feature type="sequence conflict" description="In Ref. 1; BAA88303." evidence="4" ref="1">
    <original>S</original>
    <variation>P</variation>
    <location>
        <position position="137"/>
    </location>
</feature>
<feature type="sequence conflict" description="In Ref. 1; BAA88303." evidence="4" ref="1">
    <original>A</original>
    <variation>P</variation>
    <location>
        <position position="229"/>
    </location>
</feature>